<reference key="1">
    <citation type="journal article" date="2006" name="J. Bacteriol.">
        <title>Pathogenomic sequence analysis of Bacillus cereus and Bacillus thuringiensis isolates closely related to Bacillus anthracis.</title>
        <authorList>
            <person name="Han C.S."/>
            <person name="Xie G."/>
            <person name="Challacombe J.F."/>
            <person name="Altherr M.R."/>
            <person name="Bhotika S.S."/>
            <person name="Bruce D."/>
            <person name="Campbell C.S."/>
            <person name="Campbell M.L."/>
            <person name="Chen J."/>
            <person name="Chertkov O."/>
            <person name="Cleland C."/>
            <person name="Dimitrijevic M."/>
            <person name="Doggett N.A."/>
            <person name="Fawcett J.J."/>
            <person name="Glavina T."/>
            <person name="Goodwin L.A."/>
            <person name="Hill K.K."/>
            <person name="Hitchcock P."/>
            <person name="Jackson P.J."/>
            <person name="Keim P."/>
            <person name="Kewalramani A.R."/>
            <person name="Longmire J."/>
            <person name="Lucas S."/>
            <person name="Malfatti S."/>
            <person name="McMurry K."/>
            <person name="Meincke L.J."/>
            <person name="Misra M."/>
            <person name="Moseman B.L."/>
            <person name="Mundt M."/>
            <person name="Munk A.C."/>
            <person name="Okinaka R.T."/>
            <person name="Parson-Quintana B."/>
            <person name="Reilly L.P."/>
            <person name="Richardson P."/>
            <person name="Robinson D.L."/>
            <person name="Rubin E."/>
            <person name="Saunders E."/>
            <person name="Tapia R."/>
            <person name="Tesmer J.G."/>
            <person name="Thayer N."/>
            <person name="Thompson L.S."/>
            <person name="Tice H."/>
            <person name="Ticknor L.O."/>
            <person name="Wills P.L."/>
            <person name="Brettin T.S."/>
            <person name="Gilna P."/>
        </authorList>
    </citation>
    <scope>NUCLEOTIDE SEQUENCE [LARGE SCALE GENOMIC DNA]</scope>
    <source>
        <strain>ZK / E33L</strain>
    </source>
</reference>
<comment type="function">
    <text evidence="1">Involved in control of chromosome replication initiation. Inhibits the cooperative binding of DnaA to the oriC region, thus negatively regulating initiation of chromosome replication. Inhibits the ability of DnaA-ATP to form a helix on DNA; does not disassemble preformed DnaA-DNA helices. Decreases the residence time of DnaA on the chromosome at its binding sites (oriC, replication forks and promoter-binding sites). Tethers DnaA to the replication machinery via the DNA polymerase beta sliding clamp subunit (dnaN). Associates with oriC and other DnaA targets on the chromosome in a DnaA-dependent manner.</text>
</comment>
<comment type="cofactor">
    <cofactor evidence="1">
        <name>Zn(2+)</name>
        <dbReference type="ChEBI" id="CHEBI:29105"/>
    </cofactor>
    <text evidence="1">Binds 1 zinc ion per subunit.</text>
</comment>
<comment type="subunit">
    <text evidence="1">Homotetramer. Interacts with both DnaA and DnaN, acting as a bridge between these two proteins.</text>
</comment>
<comment type="subcellular location">
    <subcellularLocation>
        <location evidence="1">Cytoplasm</location>
        <location evidence="1">Nucleoid</location>
    </subcellularLocation>
    <text evidence="1">Localizes in tight foci, which correspond to the replisome at mid-cell throughout the cell cycle.</text>
</comment>
<comment type="similarity">
    <text evidence="1">Belongs to the YabA family.</text>
</comment>
<comment type="sequence caution" evidence="2">
    <conflict type="erroneous initiation">
        <sequence resource="EMBL-CDS" id="AAU20201"/>
    </conflict>
</comment>
<dbReference type="EMBL" id="CP000001">
    <property type="protein sequence ID" value="AAU20201.1"/>
    <property type="status" value="ALT_INIT"/>
    <property type="molecule type" value="Genomic_DNA"/>
</dbReference>
<dbReference type="RefSeq" id="WP_000412056.1">
    <property type="nucleotide sequence ID" value="NZ_CP009968.1"/>
</dbReference>
<dbReference type="SMR" id="Q63HH5"/>
<dbReference type="GeneID" id="93011037"/>
<dbReference type="KEGG" id="bcz:BCE33L0029"/>
<dbReference type="PATRIC" id="fig|288681.22.peg.126"/>
<dbReference type="Proteomes" id="UP000002612">
    <property type="component" value="Chromosome"/>
</dbReference>
<dbReference type="GO" id="GO:0009295">
    <property type="term" value="C:nucleoid"/>
    <property type="evidence" value="ECO:0007669"/>
    <property type="project" value="UniProtKB-SubCell"/>
</dbReference>
<dbReference type="GO" id="GO:0006260">
    <property type="term" value="P:DNA replication"/>
    <property type="evidence" value="ECO:0007669"/>
    <property type="project" value="UniProtKB-UniRule"/>
</dbReference>
<dbReference type="Gene3D" id="1.20.5.1160">
    <property type="entry name" value="Vasodilator-stimulated phosphoprotein"/>
    <property type="match status" value="1"/>
</dbReference>
<dbReference type="HAMAP" id="MF_01159">
    <property type="entry name" value="YabA"/>
    <property type="match status" value="1"/>
</dbReference>
<dbReference type="InterPro" id="IPR010377">
    <property type="entry name" value="YabA"/>
</dbReference>
<dbReference type="NCBIfam" id="NF009644">
    <property type="entry name" value="PRK13169.1-5"/>
    <property type="match status" value="1"/>
</dbReference>
<dbReference type="Pfam" id="PF06156">
    <property type="entry name" value="YabA"/>
    <property type="match status" value="1"/>
</dbReference>
<dbReference type="PIRSF" id="PIRSF021439">
    <property type="entry name" value="DUF972"/>
    <property type="match status" value="1"/>
</dbReference>
<evidence type="ECO:0000255" key="1">
    <source>
        <dbReference type="HAMAP-Rule" id="MF_01159"/>
    </source>
</evidence>
<evidence type="ECO:0000305" key="2"/>
<keyword id="KW-0963">Cytoplasm</keyword>
<keyword id="KW-0235">DNA replication</keyword>
<keyword id="KW-0236">DNA replication inhibitor</keyword>
<keyword id="KW-0479">Metal-binding</keyword>
<keyword id="KW-0862">Zinc</keyword>
<gene>
    <name evidence="1" type="primary">yabA</name>
    <name type="ordered locus">BCE33L0029</name>
</gene>
<sequence length="116" mass="13766">MEKKDIFASVSSMEEQIGHLYKQLGELKQHLAELLEENQHIKMENENLRHRFEEVQIKEKQKTQKRKEVKPKTDIGEGYDNLARLYQEGFHICNLHYGSVRKEGDCLFCLSFLNKK</sequence>
<proteinExistence type="inferred from homology"/>
<organism>
    <name type="scientific">Bacillus cereus (strain ZK / E33L)</name>
    <dbReference type="NCBI Taxonomy" id="288681"/>
    <lineage>
        <taxon>Bacteria</taxon>
        <taxon>Bacillati</taxon>
        <taxon>Bacillota</taxon>
        <taxon>Bacilli</taxon>
        <taxon>Bacillales</taxon>
        <taxon>Bacillaceae</taxon>
        <taxon>Bacillus</taxon>
        <taxon>Bacillus cereus group</taxon>
    </lineage>
</organism>
<accession>Q63HH5</accession>
<protein>
    <recommendedName>
        <fullName evidence="1">Replication initiation control protein YabA</fullName>
    </recommendedName>
</protein>
<name>YABA_BACCZ</name>
<feature type="chain" id="PRO_0000211901" description="Replication initiation control protein YabA">
    <location>
        <begin position="1"/>
        <end position="116"/>
    </location>
</feature>
<feature type="binding site" evidence="1">
    <location>
        <position position="91"/>
    </location>
    <ligand>
        <name>Zn(2+)</name>
        <dbReference type="ChEBI" id="CHEBI:29105"/>
    </ligand>
</feature>
<feature type="binding site" evidence="1">
    <location>
        <position position="93"/>
    </location>
    <ligand>
        <name>Zn(2+)</name>
        <dbReference type="ChEBI" id="CHEBI:29105"/>
    </ligand>
</feature>
<feature type="binding site" evidence="1">
    <location>
        <position position="106"/>
    </location>
    <ligand>
        <name>Zn(2+)</name>
        <dbReference type="ChEBI" id="CHEBI:29105"/>
    </ligand>
</feature>
<feature type="binding site" evidence="1">
    <location>
        <position position="109"/>
    </location>
    <ligand>
        <name>Zn(2+)</name>
        <dbReference type="ChEBI" id="CHEBI:29105"/>
    </ligand>
</feature>